<organism>
    <name type="scientific">Sulfolobus acidocaldarius (strain ATCC 33909 / DSM 639 / JCM 8929 / NBRC 15157 / NCIMB 11770)</name>
    <dbReference type="NCBI Taxonomy" id="330779"/>
    <lineage>
        <taxon>Archaea</taxon>
        <taxon>Thermoproteota</taxon>
        <taxon>Thermoprotei</taxon>
        <taxon>Sulfolobales</taxon>
        <taxon>Sulfolobaceae</taxon>
        <taxon>Sulfolobus</taxon>
    </lineage>
</organism>
<proteinExistence type="evidence at protein level"/>
<evidence type="ECO:0000255" key="1">
    <source>
        <dbReference type="PROSITE-ProRule" id="PRU00434"/>
    </source>
</evidence>
<evidence type="ECO:0000269" key="2">
    <source>
    </source>
</evidence>
<evidence type="ECO:0000303" key="3">
    <source>
    </source>
</evidence>
<evidence type="ECO:0000305" key="4"/>
<evidence type="ECO:0000305" key="5">
    <source>
    </source>
</evidence>
<dbReference type="EC" id="7.5.2.13" evidence="2"/>
<dbReference type="EMBL" id="CP000077">
    <property type="status" value="NOT_ANNOTATED_CDS"/>
    <property type="molecule type" value="Genomic_DNA"/>
</dbReference>
<dbReference type="RefSeq" id="WP_015385776.1">
    <property type="nucleotide sequence ID" value="NC_007181.1"/>
</dbReference>
<dbReference type="SMR" id="P0DTT6"/>
<dbReference type="GeneID" id="14552637"/>
<dbReference type="GeneID" id="78442481"/>
<dbReference type="Proteomes" id="UP000001018">
    <property type="component" value="Chromosome"/>
</dbReference>
<dbReference type="GO" id="GO:0005886">
    <property type="term" value="C:plasma membrane"/>
    <property type="evidence" value="ECO:0007669"/>
    <property type="project" value="UniProtKB-SubCell"/>
</dbReference>
<dbReference type="GO" id="GO:0015614">
    <property type="term" value="F:ABC-type D-xylose transporter activity"/>
    <property type="evidence" value="ECO:0007669"/>
    <property type="project" value="RHEA"/>
</dbReference>
<dbReference type="GO" id="GO:0015612">
    <property type="term" value="F:ABC-type L-arabinose transporter activity"/>
    <property type="evidence" value="ECO:0007669"/>
    <property type="project" value="RHEA"/>
</dbReference>
<dbReference type="GO" id="GO:0005524">
    <property type="term" value="F:ATP binding"/>
    <property type="evidence" value="ECO:0007669"/>
    <property type="project" value="UniProtKB-KW"/>
</dbReference>
<dbReference type="GO" id="GO:0016887">
    <property type="term" value="F:ATP hydrolysis activity"/>
    <property type="evidence" value="ECO:0007669"/>
    <property type="project" value="InterPro"/>
</dbReference>
<dbReference type="CDD" id="cd03216">
    <property type="entry name" value="ABC_Carb_Monos_I"/>
    <property type="match status" value="1"/>
</dbReference>
<dbReference type="Gene3D" id="3.40.50.300">
    <property type="entry name" value="P-loop containing nucleotide triphosphate hydrolases"/>
    <property type="match status" value="1"/>
</dbReference>
<dbReference type="InterPro" id="IPR003593">
    <property type="entry name" value="AAA+_ATPase"/>
</dbReference>
<dbReference type="InterPro" id="IPR050107">
    <property type="entry name" value="ABC_carbohydrate_import_ATPase"/>
</dbReference>
<dbReference type="InterPro" id="IPR003439">
    <property type="entry name" value="ABC_transporter-like_ATP-bd"/>
</dbReference>
<dbReference type="InterPro" id="IPR017871">
    <property type="entry name" value="ABC_transporter-like_CS"/>
</dbReference>
<dbReference type="InterPro" id="IPR027417">
    <property type="entry name" value="P-loop_NTPase"/>
</dbReference>
<dbReference type="PANTHER" id="PTHR43790">
    <property type="entry name" value="CARBOHYDRATE TRANSPORT ATP-BINDING PROTEIN MG119-RELATED"/>
    <property type="match status" value="1"/>
</dbReference>
<dbReference type="PANTHER" id="PTHR43790:SF8">
    <property type="entry name" value="SUGAR ABC TRANSPORTER ATP-BINDING PROTEIN"/>
    <property type="match status" value="1"/>
</dbReference>
<dbReference type="Pfam" id="PF00005">
    <property type="entry name" value="ABC_tran"/>
    <property type="match status" value="1"/>
</dbReference>
<dbReference type="SMART" id="SM00382">
    <property type="entry name" value="AAA"/>
    <property type="match status" value="1"/>
</dbReference>
<dbReference type="SUPFAM" id="SSF52540">
    <property type="entry name" value="P-loop containing nucleoside triphosphate hydrolases"/>
    <property type="match status" value="1"/>
</dbReference>
<dbReference type="PROSITE" id="PS00211">
    <property type="entry name" value="ABC_TRANSPORTER_1"/>
    <property type="match status" value="1"/>
</dbReference>
<dbReference type="PROSITE" id="PS50893">
    <property type="entry name" value="ABC_TRANSPORTER_2"/>
    <property type="match status" value="1"/>
</dbReference>
<accession>P0DTT6</accession>
<comment type="function">
    <text evidence="2 4">Part of the ABC transporter complex XylFGH involved in the uptake of xylose and arabinose (PubMed:29150511). Responsible for energy coupling to the transport system (Probable).</text>
</comment>
<comment type="catalytic activity">
    <reaction evidence="2">
        <text>D-xylose(out) + ATP + H2O = D-xylose(in) + ADP + phosphate + H(+)</text>
        <dbReference type="Rhea" id="RHEA:29899"/>
        <dbReference type="ChEBI" id="CHEBI:15377"/>
        <dbReference type="ChEBI" id="CHEBI:15378"/>
        <dbReference type="ChEBI" id="CHEBI:30616"/>
        <dbReference type="ChEBI" id="CHEBI:43474"/>
        <dbReference type="ChEBI" id="CHEBI:53455"/>
        <dbReference type="ChEBI" id="CHEBI:456216"/>
        <dbReference type="EC" id="7.5.2.13"/>
    </reaction>
    <physiologicalReaction direction="left-to-right" evidence="2">
        <dbReference type="Rhea" id="RHEA:29900"/>
    </physiologicalReaction>
</comment>
<comment type="catalytic activity">
    <reaction evidence="2">
        <text>L-arabinose(out) + ATP + H2O = L-arabinose(in) + ADP + phosphate + H(+)</text>
        <dbReference type="Rhea" id="RHEA:30007"/>
        <dbReference type="ChEBI" id="CHEBI:15377"/>
        <dbReference type="ChEBI" id="CHEBI:15378"/>
        <dbReference type="ChEBI" id="CHEBI:17535"/>
        <dbReference type="ChEBI" id="CHEBI:30616"/>
        <dbReference type="ChEBI" id="CHEBI:43474"/>
        <dbReference type="ChEBI" id="CHEBI:456216"/>
        <dbReference type="EC" id="7.5.2.13"/>
    </reaction>
    <physiologicalReaction direction="left-to-right" evidence="2">
        <dbReference type="Rhea" id="RHEA:30008"/>
    </physiologicalReaction>
</comment>
<comment type="subunit">
    <text evidence="5">The complex is composed of two ATP-binding proteins (XylG), two transmembrane proteins (XylH) and a solute-binding protein (XylF).</text>
</comment>
<comment type="subcellular location">
    <subcellularLocation>
        <location evidence="4">Cell membrane</location>
        <topology evidence="4">Peripheral membrane protein</topology>
    </subcellularLocation>
</comment>
<comment type="induction">
    <text evidence="2">Up-regulated in the presence of D-xylose, L-arabinose and D-arabinose.</text>
</comment>
<comment type="disruption phenotype">
    <text evidence="2">Deletion of the gene results in a growth defect on D-xylose and L-arabinose.</text>
</comment>
<comment type="similarity">
    <text evidence="4">Belongs to the ABC transporter superfamily.</text>
</comment>
<protein>
    <recommendedName>
        <fullName evidence="4">Xylose/arabinose import ATP-binding protein XylG</fullName>
        <ecNumber evidence="2">7.5.2.13</ecNumber>
    </recommendedName>
</protein>
<feature type="chain" id="PRO_0000449394" description="Xylose/arabinose import ATP-binding protein XylG">
    <location>
        <begin position="1"/>
        <end position="251"/>
    </location>
</feature>
<feature type="domain" description="ABC transporter" evidence="1">
    <location>
        <begin position="5"/>
        <end position="241"/>
    </location>
</feature>
<feature type="binding site" evidence="1">
    <location>
        <begin position="37"/>
        <end position="44"/>
    </location>
    <ligand>
        <name>ATP</name>
        <dbReference type="ChEBI" id="CHEBI:30616"/>
    </ligand>
</feature>
<keyword id="KW-0067">ATP-binding</keyword>
<keyword id="KW-1003">Cell membrane</keyword>
<keyword id="KW-0472">Membrane</keyword>
<keyword id="KW-0547">Nucleotide-binding</keyword>
<keyword id="KW-1185">Reference proteome</keyword>
<keyword id="KW-0762">Sugar transport</keyword>
<keyword id="KW-1278">Translocase</keyword>
<keyword id="KW-0813">Transport</keyword>
<name>XYLG_SULAC</name>
<sequence>MSDLLEIRDVHKSFGAVKALDGVSMEINKGEVVALLGDNGAGKSTLIKIISGYHKPDRGDLVFEGKKVIFNSPNDARSLGIETIYQDLALIPDLPIYYNIFLAREVTNKIFLNKKKMMEESKKLLDSLQIRIPDINMKVENLSGGQRQAVAVARAVYFSAKMILMDEPTAALSVVEARKVLELARNLKKKGLGVLIITHNIIQGYEVADRIYVLDRGKIIFHKKKEETNVEEITEVMTSFALGKVNLGEKR</sequence>
<reference key="1">
    <citation type="journal article" date="2005" name="J. Bacteriol.">
        <title>The genome of Sulfolobus acidocaldarius, a model organism of the Crenarchaeota.</title>
        <authorList>
            <person name="Chen L."/>
            <person name="Bruegger K."/>
            <person name="Skovgaard M."/>
            <person name="Redder P."/>
            <person name="She Q."/>
            <person name="Torarinsson E."/>
            <person name="Greve B."/>
            <person name="Awayez M."/>
            <person name="Zibat A."/>
            <person name="Klenk H.-P."/>
            <person name="Garrett R.A."/>
        </authorList>
    </citation>
    <scope>NUCLEOTIDE SEQUENCE [LARGE SCALE GENOMIC DNA]</scope>
    <source>
        <strain>ATCC 33909 / DSM 639 / JCM 8929 / NBRC 15157 / NCIMB 11770</strain>
    </source>
</reference>
<reference key="2">
    <citation type="journal article" date="2018" name="Appl. Environ. Microbiol.">
        <title>Sulfolobus acidocaldarius transports pentoses via a carbohydrate uptake transporter 2 (CUT2)-type ABC transporter and metabolizes them through the aldolase-independent Weimberg pathway.</title>
        <authorList>
            <person name="Wagner M."/>
            <person name="Shen L."/>
            <person name="Albersmeier A."/>
            <person name="van der Kolk N."/>
            <person name="Kim S."/>
            <person name="Cha J."/>
            <person name="Braesen C."/>
            <person name="Kalinowski J."/>
            <person name="Siebers B."/>
            <person name="Albers S.V."/>
        </authorList>
    </citation>
    <scope>IDENTIFICATION</scope>
    <scope>FUNCTION</scope>
    <scope>CATALYTIC ACTIVITY</scope>
    <scope>SUBUNIT</scope>
    <scope>INDUCTION</scope>
    <scope>DISRUPTION PHENOTYPE</scope>
    <source>
        <strain>MW001</strain>
    </source>
</reference>
<gene>
    <name evidence="3" type="primary">xylG</name>
    <name evidence="3" type="ordered locus">Saci_2120</name>
</gene>